<sequence length="628" mass="69211">MKLTEIQDPSFLKRMSVSELELFAGDIRRFLIEELATTGGHLAPNLGVVELTLALHREFDSPNDKFVWDVGHQAYVHKILTGRAGQFDTLRQHKGLCGFPKRNESVHDVWETGHSSTSLSAAMGIAVSNELKGNDDRAIAIIGDGALTGGMALEALNHIGAEQQNVIVILNDNEMSIAPNVGAMHQMLGRIRSSRKVRYAQDELETLIKKIPLIGGKLEKGGEKLKEAVKGALVPGMFFEELGFNYYGPVDGHDLTDLIEQLNYVKKEEGPVLLHVITKKGKGYRPAEYDGIGTWHGLGPYKIESGEVIKGKSKAPSYSFTVADTLTKMAREDDKLTLITPAMSVGSKLDCFEKEFPERMFDVGIAEQHAVTFAAGQATQGMKPVVSIYSTFFQRAYDQLVHDVARQNLDVTFTIDRSGLVGADGETHQGVFDIAFMRHVPNIRIVMAKDENELQHLLYSAVKYEGPIAVRFPRGEGIGVPMDETLHEISLDTWDVEREGTDVAIMAFGPQVQDALKIAELLEGDVSVRVINARTIKPLDEKMLNALYAEGIPLVTLEEAVLKGGFGSAVLEHANEQEAFPRVKRFGIPDWYIEHGGVNELLEEIGLLPGQIAEEVRSFVNQGKKQSV</sequence>
<protein>
    <recommendedName>
        <fullName evidence="1">1-deoxy-D-xylulose-5-phosphate synthase</fullName>
        <ecNumber evidence="1">2.2.1.7</ecNumber>
    </recommendedName>
    <alternativeName>
        <fullName evidence="1">1-deoxyxylulose-5-phosphate synthase</fullName>
        <shortName evidence="1">DXP synthase</shortName>
        <shortName evidence="1">DXPS</shortName>
    </alternativeName>
</protein>
<comment type="function">
    <text evidence="1">Catalyzes the acyloin condensation reaction between C atoms 2 and 3 of pyruvate and glyceraldehyde 3-phosphate to yield 1-deoxy-D-xylulose-5-phosphate (DXP).</text>
</comment>
<comment type="catalytic activity">
    <reaction evidence="1">
        <text>D-glyceraldehyde 3-phosphate + pyruvate + H(+) = 1-deoxy-D-xylulose 5-phosphate + CO2</text>
        <dbReference type="Rhea" id="RHEA:12605"/>
        <dbReference type="ChEBI" id="CHEBI:15361"/>
        <dbReference type="ChEBI" id="CHEBI:15378"/>
        <dbReference type="ChEBI" id="CHEBI:16526"/>
        <dbReference type="ChEBI" id="CHEBI:57792"/>
        <dbReference type="ChEBI" id="CHEBI:59776"/>
        <dbReference type="EC" id="2.2.1.7"/>
    </reaction>
</comment>
<comment type="cofactor">
    <cofactor evidence="1">
        <name>Mg(2+)</name>
        <dbReference type="ChEBI" id="CHEBI:18420"/>
    </cofactor>
    <text evidence="1">Binds 1 Mg(2+) ion per subunit.</text>
</comment>
<comment type="cofactor">
    <cofactor evidence="1">
        <name>thiamine diphosphate</name>
        <dbReference type="ChEBI" id="CHEBI:58937"/>
    </cofactor>
    <text evidence="1">Binds 1 thiamine pyrophosphate per subunit.</text>
</comment>
<comment type="pathway">
    <text evidence="1">Metabolic intermediate biosynthesis; 1-deoxy-D-xylulose 5-phosphate biosynthesis; 1-deoxy-D-xylulose 5-phosphate from D-glyceraldehyde 3-phosphate and pyruvate: step 1/1.</text>
</comment>
<comment type="subunit">
    <text evidence="1">Homodimer.</text>
</comment>
<comment type="similarity">
    <text evidence="1">Belongs to the transketolase family. DXPS subfamily.</text>
</comment>
<gene>
    <name evidence="1" type="primary">dxs</name>
    <name type="ordered locus">Exig_0908</name>
</gene>
<reference key="1">
    <citation type="submission" date="2008-04" db="EMBL/GenBank/DDBJ databases">
        <title>Complete sequence of chromosome of Exiguobacterium sibiricum 255-15.</title>
        <authorList>
            <consortium name="US DOE Joint Genome Institute"/>
            <person name="Copeland A."/>
            <person name="Lucas S."/>
            <person name="Lapidus A."/>
            <person name="Glavina del Rio T."/>
            <person name="Dalin E."/>
            <person name="Tice H."/>
            <person name="Bruce D."/>
            <person name="Goodwin L."/>
            <person name="Pitluck S."/>
            <person name="Kiss H."/>
            <person name="Chertkov O."/>
            <person name="Monk C."/>
            <person name="Brettin T."/>
            <person name="Detter J.C."/>
            <person name="Han C."/>
            <person name="Kuske C.R."/>
            <person name="Schmutz J."/>
            <person name="Larimer F."/>
            <person name="Land M."/>
            <person name="Hauser L."/>
            <person name="Kyrpides N."/>
            <person name="Mikhailova N."/>
            <person name="Vishnivetskaya T."/>
            <person name="Rodrigues D.F."/>
            <person name="Gilichinsky D."/>
            <person name="Tiedje J."/>
            <person name="Richardson P."/>
        </authorList>
    </citation>
    <scope>NUCLEOTIDE SEQUENCE [LARGE SCALE GENOMIC DNA]</scope>
    <source>
        <strain>DSM 17290 / CCUG 55495 / CIP 109462 / JCM 13490 / 255-15</strain>
    </source>
</reference>
<accession>B1YLQ5</accession>
<feature type="chain" id="PRO_1000115742" description="1-deoxy-D-xylulose-5-phosphate synthase">
    <location>
        <begin position="1"/>
        <end position="628"/>
    </location>
</feature>
<feature type="binding site" evidence="1">
    <location>
        <position position="72"/>
    </location>
    <ligand>
        <name>thiamine diphosphate</name>
        <dbReference type="ChEBI" id="CHEBI:58937"/>
    </ligand>
</feature>
<feature type="binding site" evidence="1">
    <location>
        <begin position="113"/>
        <end position="115"/>
    </location>
    <ligand>
        <name>thiamine diphosphate</name>
        <dbReference type="ChEBI" id="CHEBI:58937"/>
    </ligand>
</feature>
<feature type="binding site" evidence="1">
    <location>
        <position position="144"/>
    </location>
    <ligand>
        <name>Mg(2+)</name>
        <dbReference type="ChEBI" id="CHEBI:18420"/>
    </ligand>
</feature>
<feature type="binding site" evidence="1">
    <location>
        <begin position="145"/>
        <end position="146"/>
    </location>
    <ligand>
        <name>thiamine diphosphate</name>
        <dbReference type="ChEBI" id="CHEBI:58937"/>
    </ligand>
</feature>
<feature type="binding site" evidence="1">
    <location>
        <position position="173"/>
    </location>
    <ligand>
        <name>Mg(2+)</name>
        <dbReference type="ChEBI" id="CHEBI:18420"/>
    </ligand>
</feature>
<feature type="binding site" evidence="1">
    <location>
        <position position="173"/>
    </location>
    <ligand>
        <name>thiamine diphosphate</name>
        <dbReference type="ChEBI" id="CHEBI:58937"/>
    </ligand>
</feature>
<feature type="binding site" evidence="1">
    <location>
        <position position="284"/>
    </location>
    <ligand>
        <name>thiamine diphosphate</name>
        <dbReference type="ChEBI" id="CHEBI:58937"/>
    </ligand>
</feature>
<feature type="binding site" evidence="1">
    <location>
        <position position="367"/>
    </location>
    <ligand>
        <name>thiamine diphosphate</name>
        <dbReference type="ChEBI" id="CHEBI:58937"/>
    </ligand>
</feature>
<name>DXS_EXIS2</name>
<organism>
    <name type="scientific">Exiguobacterium sibiricum (strain DSM 17290 / CCUG 55495 / CIP 109462 / JCM 13490 / 255-15)</name>
    <dbReference type="NCBI Taxonomy" id="262543"/>
    <lineage>
        <taxon>Bacteria</taxon>
        <taxon>Bacillati</taxon>
        <taxon>Bacillota</taxon>
        <taxon>Bacilli</taxon>
        <taxon>Bacillales</taxon>
        <taxon>Bacillales Family XII. Incertae Sedis</taxon>
        <taxon>Exiguobacterium</taxon>
    </lineage>
</organism>
<keyword id="KW-0414">Isoprene biosynthesis</keyword>
<keyword id="KW-0460">Magnesium</keyword>
<keyword id="KW-0479">Metal-binding</keyword>
<keyword id="KW-1185">Reference proteome</keyword>
<keyword id="KW-0784">Thiamine biosynthesis</keyword>
<keyword id="KW-0786">Thiamine pyrophosphate</keyword>
<keyword id="KW-0808">Transferase</keyword>
<dbReference type="EC" id="2.2.1.7" evidence="1"/>
<dbReference type="EMBL" id="CP001022">
    <property type="protein sequence ID" value="ACB60388.1"/>
    <property type="molecule type" value="Genomic_DNA"/>
</dbReference>
<dbReference type="RefSeq" id="WP_012369812.1">
    <property type="nucleotide sequence ID" value="NC_010556.1"/>
</dbReference>
<dbReference type="SMR" id="B1YLQ5"/>
<dbReference type="STRING" id="262543.Exig_0908"/>
<dbReference type="KEGG" id="esi:Exig_0908"/>
<dbReference type="eggNOG" id="COG1154">
    <property type="taxonomic scope" value="Bacteria"/>
</dbReference>
<dbReference type="HOGENOM" id="CLU_009227_1_4_9"/>
<dbReference type="OrthoDB" id="9803371at2"/>
<dbReference type="UniPathway" id="UPA00064">
    <property type="reaction ID" value="UER00091"/>
</dbReference>
<dbReference type="Proteomes" id="UP000001681">
    <property type="component" value="Chromosome"/>
</dbReference>
<dbReference type="GO" id="GO:0005829">
    <property type="term" value="C:cytosol"/>
    <property type="evidence" value="ECO:0007669"/>
    <property type="project" value="TreeGrafter"/>
</dbReference>
<dbReference type="GO" id="GO:0008661">
    <property type="term" value="F:1-deoxy-D-xylulose-5-phosphate synthase activity"/>
    <property type="evidence" value="ECO:0007669"/>
    <property type="project" value="UniProtKB-UniRule"/>
</dbReference>
<dbReference type="GO" id="GO:0000287">
    <property type="term" value="F:magnesium ion binding"/>
    <property type="evidence" value="ECO:0007669"/>
    <property type="project" value="UniProtKB-UniRule"/>
</dbReference>
<dbReference type="GO" id="GO:0030976">
    <property type="term" value="F:thiamine pyrophosphate binding"/>
    <property type="evidence" value="ECO:0007669"/>
    <property type="project" value="UniProtKB-UniRule"/>
</dbReference>
<dbReference type="GO" id="GO:0052865">
    <property type="term" value="P:1-deoxy-D-xylulose 5-phosphate biosynthetic process"/>
    <property type="evidence" value="ECO:0007669"/>
    <property type="project" value="UniProtKB-UniPathway"/>
</dbReference>
<dbReference type="GO" id="GO:0019288">
    <property type="term" value="P:isopentenyl diphosphate biosynthetic process, methylerythritol 4-phosphate pathway"/>
    <property type="evidence" value="ECO:0007669"/>
    <property type="project" value="TreeGrafter"/>
</dbReference>
<dbReference type="GO" id="GO:0016114">
    <property type="term" value="P:terpenoid biosynthetic process"/>
    <property type="evidence" value="ECO:0007669"/>
    <property type="project" value="UniProtKB-UniRule"/>
</dbReference>
<dbReference type="GO" id="GO:0009228">
    <property type="term" value="P:thiamine biosynthetic process"/>
    <property type="evidence" value="ECO:0007669"/>
    <property type="project" value="UniProtKB-UniRule"/>
</dbReference>
<dbReference type="CDD" id="cd02007">
    <property type="entry name" value="TPP_DXS"/>
    <property type="match status" value="1"/>
</dbReference>
<dbReference type="CDD" id="cd07033">
    <property type="entry name" value="TPP_PYR_DXS_TK_like"/>
    <property type="match status" value="1"/>
</dbReference>
<dbReference type="FunFam" id="3.40.50.920:FF:000002">
    <property type="entry name" value="1-deoxy-D-xylulose-5-phosphate synthase"/>
    <property type="match status" value="1"/>
</dbReference>
<dbReference type="FunFam" id="3.40.50.970:FF:000005">
    <property type="entry name" value="1-deoxy-D-xylulose-5-phosphate synthase"/>
    <property type="match status" value="1"/>
</dbReference>
<dbReference type="Gene3D" id="3.40.50.920">
    <property type="match status" value="1"/>
</dbReference>
<dbReference type="Gene3D" id="3.40.50.970">
    <property type="match status" value="2"/>
</dbReference>
<dbReference type="HAMAP" id="MF_00315">
    <property type="entry name" value="DXP_synth"/>
    <property type="match status" value="1"/>
</dbReference>
<dbReference type="InterPro" id="IPR005477">
    <property type="entry name" value="Dxylulose-5-P_synthase"/>
</dbReference>
<dbReference type="InterPro" id="IPR029061">
    <property type="entry name" value="THDP-binding"/>
</dbReference>
<dbReference type="InterPro" id="IPR009014">
    <property type="entry name" value="Transketo_C/PFOR_II"/>
</dbReference>
<dbReference type="InterPro" id="IPR005475">
    <property type="entry name" value="Transketolase-like_Pyr-bd"/>
</dbReference>
<dbReference type="InterPro" id="IPR020826">
    <property type="entry name" value="Transketolase_BS"/>
</dbReference>
<dbReference type="InterPro" id="IPR033248">
    <property type="entry name" value="Transketolase_C"/>
</dbReference>
<dbReference type="InterPro" id="IPR049557">
    <property type="entry name" value="Transketolase_CS"/>
</dbReference>
<dbReference type="NCBIfam" id="TIGR00204">
    <property type="entry name" value="dxs"/>
    <property type="match status" value="1"/>
</dbReference>
<dbReference type="NCBIfam" id="NF003933">
    <property type="entry name" value="PRK05444.2-2"/>
    <property type="match status" value="1"/>
</dbReference>
<dbReference type="PANTHER" id="PTHR43322">
    <property type="entry name" value="1-D-DEOXYXYLULOSE 5-PHOSPHATE SYNTHASE-RELATED"/>
    <property type="match status" value="1"/>
</dbReference>
<dbReference type="PANTHER" id="PTHR43322:SF5">
    <property type="entry name" value="1-DEOXY-D-XYLULOSE-5-PHOSPHATE SYNTHASE, CHLOROPLASTIC"/>
    <property type="match status" value="1"/>
</dbReference>
<dbReference type="Pfam" id="PF13292">
    <property type="entry name" value="DXP_synthase_N"/>
    <property type="match status" value="1"/>
</dbReference>
<dbReference type="Pfam" id="PF02779">
    <property type="entry name" value="Transket_pyr"/>
    <property type="match status" value="1"/>
</dbReference>
<dbReference type="Pfam" id="PF02780">
    <property type="entry name" value="Transketolase_C"/>
    <property type="match status" value="1"/>
</dbReference>
<dbReference type="SMART" id="SM00861">
    <property type="entry name" value="Transket_pyr"/>
    <property type="match status" value="1"/>
</dbReference>
<dbReference type="SUPFAM" id="SSF52518">
    <property type="entry name" value="Thiamin diphosphate-binding fold (THDP-binding)"/>
    <property type="match status" value="2"/>
</dbReference>
<dbReference type="SUPFAM" id="SSF52922">
    <property type="entry name" value="TK C-terminal domain-like"/>
    <property type="match status" value="1"/>
</dbReference>
<dbReference type="PROSITE" id="PS00801">
    <property type="entry name" value="TRANSKETOLASE_1"/>
    <property type="match status" value="1"/>
</dbReference>
<dbReference type="PROSITE" id="PS00802">
    <property type="entry name" value="TRANSKETOLASE_2"/>
    <property type="match status" value="1"/>
</dbReference>
<evidence type="ECO:0000255" key="1">
    <source>
        <dbReference type="HAMAP-Rule" id="MF_00315"/>
    </source>
</evidence>
<proteinExistence type="inferred from homology"/>